<reference key="1">
    <citation type="journal article" date="2004" name="Environ. Microbiol.">
        <title>The genome of Desulfotalea psychrophila, a sulfate-reducing bacterium from permanently cold Arctic sediments.</title>
        <authorList>
            <person name="Rabus R."/>
            <person name="Ruepp A."/>
            <person name="Frickey T."/>
            <person name="Rattei T."/>
            <person name="Fartmann B."/>
            <person name="Stark M."/>
            <person name="Bauer M."/>
            <person name="Zibat A."/>
            <person name="Lombardot T."/>
            <person name="Becker I."/>
            <person name="Amann J."/>
            <person name="Gellner K."/>
            <person name="Teeling H."/>
            <person name="Leuschner W.D."/>
            <person name="Gloeckner F.-O."/>
            <person name="Lupas A.N."/>
            <person name="Amann R."/>
            <person name="Klenk H.-P."/>
        </authorList>
    </citation>
    <scope>NUCLEOTIDE SEQUENCE [LARGE SCALE GENOMIC DNA]</scope>
    <source>
        <strain>DSM 12343 / LSv54</strain>
    </source>
</reference>
<dbReference type="EC" id="6.3.5.-" evidence="1"/>
<dbReference type="EMBL" id="CR522870">
    <property type="protein sequence ID" value="CAG35443.1"/>
    <property type="status" value="ALT_INIT"/>
    <property type="molecule type" value="Genomic_DNA"/>
</dbReference>
<dbReference type="RefSeq" id="WP_041277590.1">
    <property type="nucleotide sequence ID" value="NC_006138.1"/>
</dbReference>
<dbReference type="SMR" id="Q6AQD0"/>
<dbReference type="STRING" id="177439.DP0714"/>
<dbReference type="KEGG" id="dps:DP0714"/>
<dbReference type="eggNOG" id="COG0064">
    <property type="taxonomic scope" value="Bacteria"/>
</dbReference>
<dbReference type="HOGENOM" id="CLU_019240_0_0_7"/>
<dbReference type="OrthoDB" id="9804078at2"/>
<dbReference type="Proteomes" id="UP000000602">
    <property type="component" value="Chromosome"/>
</dbReference>
<dbReference type="GO" id="GO:0050566">
    <property type="term" value="F:asparaginyl-tRNA synthase (glutamine-hydrolyzing) activity"/>
    <property type="evidence" value="ECO:0007669"/>
    <property type="project" value="RHEA"/>
</dbReference>
<dbReference type="GO" id="GO:0005524">
    <property type="term" value="F:ATP binding"/>
    <property type="evidence" value="ECO:0007669"/>
    <property type="project" value="UniProtKB-KW"/>
</dbReference>
<dbReference type="GO" id="GO:0050567">
    <property type="term" value="F:glutaminyl-tRNA synthase (glutamine-hydrolyzing) activity"/>
    <property type="evidence" value="ECO:0007669"/>
    <property type="project" value="UniProtKB-UniRule"/>
</dbReference>
<dbReference type="GO" id="GO:0070681">
    <property type="term" value="P:glutaminyl-tRNAGln biosynthesis via transamidation"/>
    <property type="evidence" value="ECO:0007669"/>
    <property type="project" value="TreeGrafter"/>
</dbReference>
<dbReference type="GO" id="GO:0006412">
    <property type="term" value="P:translation"/>
    <property type="evidence" value="ECO:0007669"/>
    <property type="project" value="UniProtKB-UniRule"/>
</dbReference>
<dbReference type="FunFam" id="1.10.10.410:FF:000001">
    <property type="entry name" value="Aspartyl/glutamyl-tRNA(Asn/Gln) amidotransferase subunit B"/>
    <property type="match status" value="1"/>
</dbReference>
<dbReference type="FunFam" id="1.10.150.380:FF:000001">
    <property type="entry name" value="Aspartyl/glutamyl-tRNA(Asn/Gln) amidotransferase subunit B"/>
    <property type="match status" value="1"/>
</dbReference>
<dbReference type="Gene3D" id="1.10.10.410">
    <property type="match status" value="1"/>
</dbReference>
<dbReference type="Gene3D" id="1.10.150.380">
    <property type="entry name" value="GatB domain, N-terminal subdomain"/>
    <property type="match status" value="1"/>
</dbReference>
<dbReference type="HAMAP" id="MF_00121">
    <property type="entry name" value="GatB"/>
    <property type="match status" value="1"/>
</dbReference>
<dbReference type="InterPro" id="IPR017959">
    <property type="entry name" value="Asn/Gln-tRNA_amidoTrfase_suB/E"/>
</dbReference>
<dbReference type="InterPro" id="IPR006075">
    <property type="entry name" value="Asn/Gln-tRNA_Trfase_suB/E_cat"/>
</dbReference>
<dbReference type="InterPro" id="IPR018027">
    <property type="entry name" value="Asn/Gln_amidotransferase"/>
</dbReference>
<dbReference type="InterPro" id="IPR003789">
    <property type="entry name" value="Asn/Gln_tRNA_amidoTrase-B-like"/>
</dbReference>
<dbReference type="InterPro" id="IPR004413">
    <property type="entry name" value="GatB"/>
</dbReference>
<dbReference type="InterPro" id="IPR042114">
    <property type="entry name" value="GatB_C_1"/>
</dbReference>
<dbReference type="InterPro" id="IPR023168">
    <property type="entry name" value="GatB_Yqey_C_2"/>
</dbReference>
<dbReference type="InterPro" id="IPR017958">
    <property type="entry name" value="Gln-tRNA_amidoTrfase_suB_CS"/>
</dbReference>
<dbReference type="InterPro" id="IPR014746">
    <property type="entry name" value="Gln_synth/guanido_kin_cat_dom"/>
</dbReference>
<dbReference type="NCBIfam" id="TIGR00133">
    <property type="entry name" value="gatB"/>
    <property type="match status" value="1"/>
</dbReference>
<dbReference type="NCBIfam" id="NF004012">
    <property type="entry name" value="PRK05477.1-2"/>
    <property type="match status" value="1"/>
</dbReference>
<dbReference type="NCBIfam" id="NF004014">
    <property type="entry name" value="PRK05477.1-4"/>
    <property type="match status" value="1"/>
</dbReference>
<dbReference type="PANTHER" id="PTHR11659">
    <property type="entry name" value="GLUTAMYL-TRNA GLN AMIDOTRANSFERASE SUBUNIT B MITOCHONDRIAL AND PROKARYOTIC PET112-RELATED"/>
    <property type="match status" value="1"/>
</dbReference>
<dbReference type="PANTHER" id="PTHR11659:SF0">
    <property type="entry name" value="GLUTAMYL-TRNA(GLN) AMIDOTRANSFERASE SUBUNIT B, MITOCHONDRIAL"/>
    <property type="match status" value="1"/>
</dbReference>
<dbReference type="Pfam" id="PF02934">
    <property type="entry name" value="GatB_N"/>
    <property type="match status" value="1"/>
</dbReference>
<dbReference type="Pfam" id="PF02637">
    <property type="entry name" value="GatB_Yqey"/>
    <property type="match status" value="1"/>
</dbReference>
<dbReference type="SMART" id="SM00845">
    <property type="entry name" value="GatB_Yqey"/>
    <property type="match status" value="1"/>
</dbReference>
<dbReference type="SUPFAM" id="SSF89095">
    <property type="entry name" value="GatB/YqeY motif"/>
    <property type="match status" value="1"/>
</dbReference>
<dbReference type="SUPFAM" id="SSF55931">
    <property type="entry name" value="Glutamine synthetase/guanido kinase"/>
    <property type="match status" value="1"/>
</dbReference>
<dbReference type="PROSITE" id="PS01234">
    <property type="entry name" value="GATB"/>
    <property type="match status" value="1"/>
</dbReference>
<keyword id="KW-0067">ATP-binding</keyword>
<keyword id="KW-0436">Ligase</keyword>
<keyword id="KW-0547">Nucleotide-binding</keyword>
<keyword id="KW-0648">Protein biosynthesis</keyword>
<keyword id="KW-1185">Reference proteome</keyword>
<accession>Q6AQD0</accession>
<protein>
    <recommendedName>
        <fullName evidence="1">Aspartyl/glutamyl-tRNA(Asn/Gln) amidotransferase subunit B</fullName>
        <shortName evidence="1">Asp/Glu-ADT subunit B</shortName>
        <ecNumber evidence="1">6.3.5.-</ecNumber>
    </recommendedName>
</protein>
<proteinExistence type="inferred from homology"/>
<name>GATB_DESPS</name>
<gene>
    <name evidence="1" type="primary">gatB</name>
    <name type="ordered locus">DP0714</name>
</gene>
<comment type="function">
    <text evidence="1">Allows the formation of correctly charged Asn-tRNA(Asn) or Gln-tRNA(Gln) through the transamidation of misacylated Asp-tRNA(Asn) or Glu-tRNA(Gln) in organisms which lack either or both of asparaginyl-tRNA or glutaminyl-tRNA synthetases. The reaction takes place in the presence of glutamine and ATP through an activated phospho-Asp-tRNA(Asn) or phospho-Glu-tRNA(Gln).</text>
</comment>
<comment type="catalytic activity">
    <reaction evidence="1">
        <text>L-glutamyl-tRNA(Gln) + L-glutamine + ATP + H2O = L-glutaminyl-tRNA(Gln) + L-glutamate + ADP + phosphate + H(+)</text>
        <dbReference type="Rhea" id="RHEA:17521"/>
        <dbReference type="Rhea" id="RHEA-COMP:9681"/>
        <dbReference type="Rhea" id="RHEA-COMP:9684"/>
        <dbReference type="ChEBI" id="CHEBI:15377"/>
        <dbReference type="ChEBI" id="CHEBI:15378"/>
        <dbReference type="ChEBI" id="CHEBI:29985"/>
        <dbReference type="ChEBI" id="CHEBI:30616"/>
        <dbReference type="ChEBI" id="CHEBI:43474"/>
        <dbReference type="ChEBI" id="CHEBI:58359"/>
        <dbReference type="ChEBI" id="CHEBI:78520"/>
        <dbReference type="ChEBI" id="CHEBI:78521"/>
        <dbReference type="ChEBI" id="CHEBI:456216"/>
    </reaction>
</comment>
<comment type="catalytic activity">
    <reaction evidence="1">
        <text>L-aspartyl-tRNA(Asn) + L-glutamine + ATP + H2O = L-asparaginyl-tRNA(Asn) + L-glutamate + ADP + phosphate + 2 H(+)</text>
        <dbReference type="Rhea" id="RHEA:14513"/>
        <dbReference type="Rhea" id="RHEA-COMP:9674"/>
        <dbReference type="Rhea" id="RHEA-COMP:9677"/>
        <dbReference type="ChEBI" id="CHEBI:15377"/>
        <dbReference type="ChEBI" id="CHEBI:15378"/>
        <dbReference type="ChEBI" id="CHEBI:29985"/>
        <dbReference type="ChEBI" id="CHEBI:30616"/>
        <dbReference type="ChEBI" id="CHEBI:43474"/>
        <dbReference type="ChEBI" id="CHEBI:58359"/>
        <dbReference type="ChEBI" id="CHEBI:78515"/>
        <dbReference type="ChEBI" id="CHEBI:78516"/>
        <dbReference type="ChEBI" id="CHEBI:456216"/>
    </reaction>
</comment>
<comment type="subunit">
    <text evidence="1">Heterotrimer of A, B and C subunits.</text>
</comment>
<comment type="similarity">
    <text evidence="1">Belongs to the GatB/GatE family. GatB subfamily.</text>
</comment>
<comment type="sequence caution" evidence="2">
    <conflict type="erroneous initiation">
        <sequence resource="EMBL-CDS" id="CAG35443"/>
    </conflict>
</comment>
<sequence length="474" mass="53101">MEFETVIGLEIHAQLKTNTKIFCACSTQYGAAPNSHTCPICLGMPGVLPVLNKKVVEYSIKMGLATGSRINQWNQFARKNYFYPDLPKGYQTSQFDLPIVEGGHIEIEVDGVSKVIGITRMHMEEDAGKLVHDDVEPVSHVDLNRTGTPLLEIVSEPDMRSPQEAYAYLKKVHAILRYLDICDGNMQEGSFRCDANISLRPMGQEKLGTRTELKNMNSFKNVQAALEYEVRRQRDLLLEGEKVIQQTLLWDPDKNRTEAMRGKEDAHDYRYFPCPDLVPIEISDEWIEEIRASLPELPEQCKARFIVDYALSEDDAVQLTSERDLALFFEEVVAAGAHPKKSANWIMTELLRELGGESIVDCRVQASQLSALLLMVDQGMISGKIAKTVFAEMMAEGTDPQLIVKEKNLLQVSDEGELLAIVDEIVAANVQQAEDFRAGKTKLMGFFVGQLMKKTKGKANPGLANELFNKALNK</sequence>
<feature type="chain" id="PRO_0000241216" description="Aspartyl/glutamyl-tRNA(Asn/Gln) amidotransferase subunit B">
    <location>
        <begin position="1"/>
        <end position="474"/>
    </location>
</feature>
<organism>
    <name type="scientific">Desulfotalea psychrophila (strain LSv54 / DSM 12343)</name>
    <dbReference type="NCBI Taxonomy" id="177439"/>
    <lineage>
        <taxon>Bacteria</taxon>
        <taxon>Pseudomonadati</taxon>
        <taxon>Thermodesulfobacteriota</taxon>
        <taxon>Desulfobulbia</taxon>
        <taxon>Desulfobulbales</taxon>
        <taxon>Desulfocapsaceae</taxon>
        <taxon>Desulfotalea</taxon>
    </lineage>
</organism>
<evidence type="ECO:0000255" key="1">
    <source>
        <dbReference type="HAMAP-Rule" id="MF_00121"/>
    </source>
</evidence>
<evidence type="ECO:0000305" key="2"/>